<sequence length="1297" mass="137513">MIPTSVTNSPPPAGLGQNGASASLGSATAAAGGGMLSGLGMVAVSGCGSAGTGAQNNYGSVVLGLASLILEGRPIADDEYQQQTVGVVGSGAATAGSGGGRLSPRPSTSRAAINITTNPYGSMGGSENRAVNGSGSTGSPSSSSLTHQRWTQKLCQLRQISPAAQTMSAEPELVSLAINDLNKDHGDYEIVRRVMLNRAGGTGLVSSAGGGTNNSSAASSPGSNSSDNILHSLQSLATTCLRGGPALAPPPSVESRPLNLAFHWSGLGGSGGRGLGFGGGAASISNTPTTTATATASSGASSSASRPKHGPHCDQFLRKMGLAKGEMPSEAEEHICDMSYVNMTCNRWRAYCMKMEAILARREPVCIEVYLGPVSHKLLLEQWIICGREKVPPPTMTLPSLCSAIRSQLYFSQIVAWCDLLRKCDPSVYDSGRVIFSNCGNNAGDLATSYTTCGGQKRPRLNIFYRIKQHTTTNSNSGLHQEDGFSAKANVHNFPNVNVSESYSISVSVRSLPRINGGLPHVEPLPPSPAPRSLRPCGGDPASTPTGGGGLHAATPTGLGARTSALTPTTTAGGSNCDNGKPGMGQILDELDGDTSLSHRERQLQKYRKRMQRRDKKRERKATPDRLNSRQQSEEPMDEGEESQTQSQTTSETQSLALTLQQPRRIAMISTGTQTSLSSCQQCGSEKTLLCLSCTGGGGAHGGSNGTANGSTNGATDDGDDSDTTASEMEETSSCSLSSADLIVGTPRNNAELLLQAIQRTPKNRNRKPHPGVLDQVSCRNADLNGGQNNNLLKATPATSGCQVCKRQKTQHNFANGKVHQPTNGKQASNGYASMHLEAEKQPDVVQILATKLTPNIERCSLNPVERCKTPPPGVADHIVVQFKTPLSQVPAKHQPDAMVPLQQQQLGKSSSKPAQLRLNCGSNLLESETPPPMTSPQMRKALPKVNLTTIFCSSAPIAIGCPAFSFDPAALSHARSQLLAPDVSVTPPVQKSFSAPTLPHAASLSVSPRFSKQALAAHKRRSRHLSDRSDRSSLGSDEQLSDEDLESGLCSPAGGSPLKCRARLAAQFGGRPLLGNLEESLLQRRLMPKIEVMGFTLQLGASGGFCPTQVNIPAVSYFYELHGETLSTPYLCEIRLPRKGYSVPRSGTVQATLLNPIGTVVRMFVIPYDMRDMPPLHRTFIRQRILAEELSQDQDEGHKVPRSPTVTSTTSKLGHFISAEQMKRLRYSIHLKFQTSRSGRLCLHTDIRLLISRRTDCDTAAAHAKGVLEAPNELVTDTMMPAEPRYSARQESAGRI</sequence>
<feature type="chain" id="PRO_0000456956" description="Protein Atossa">
    <location>
        <begin position="1"/>
        <end position="1297"/>
    </location>
</feature>
<feature type="region of interest" description="Disordered" evidence="1">
    <location>
        <begin position="1"/>
        <end position="22"/>
    </location>
</feature>
<feature type="region of interest" description="Disordered" evidence="1">
    <location>
        <begin position="117"/>
        <end position="149"/>
    </location>
</feature>
<feature type="region of interest" description="Transactivation domain 1 (TAD1)" evidence="2">
    <location>
        <begin position="174"/>
        <end position="182"/>
    </location>
</feature>
<feature type="region of interest" description="Disordered" evidence="1">
    <location>
        <begin position="206"/>
        <end position="227"/>
    </location>
</feature>
<feature type="region of interest" description="Disordered" evidence="1">
    <location>
        <begin position="287"/>
        <end position="311"/>
    </location>
</feature>
<feature type="region of interest" description="Disordered" evidence="1">
    <location>
        <begin position="518"/>
        <end position="655"/>
    </location>
</feature>
<feature type="region of interest" description="Disordered" evidence="1">
    <location>
        <begin position="704"/>
        <end position="741"/>
    </location>
</feature>
<feature type="region of interest" description="Disordered" evidence="1">
    <location>
        <begin position="1017"/>
        <end position="1048"/>
    </location>
</feature>
<feature type="region of interest" description="Required for macropage invasion" evidence="2">
    <location>
        <begin position="1074"/>
        <end position="1132"/>
    </location>
</feature>
<feature type="region of interest" description="Transactivation domain 2 (TAD2)" evidence="2">
    <location>
        <begin position="1150"/>
        <end position="1158"/>
    </location>
</feature>
<feature type="region of interest" description="Disordered" evidence="1">
    <location>
        <begin position="1192"/>
        <end position="1213"/>
    </location>
</feature>
<feature type="compositionally biased region" description="Low complexity" evidence="1">
    <location>
        <begin position="133"/>
        <end position="144"/>
    </location>
</feature>
<feature type="compositionally biased region" description="Low complexity" evidence="1">
    <location>
        <begin position="213"/>
        <end position="226"/>
    </location>
</feature>
<feature type="compositionally biased region" description="Low complexity" evidence="1">
    <location>
        <begin position="287"/>
        <end position="305"/>
    </location>
</feature>
<feature type="compositionally biased region" description="Polar residues" evidence="1">
    <location>
        <begin position="564"/>
        <end position="578"/>
    </location>
</feature>
<feature type="compositionally biased region" description="Basic residues" evidence="1">
    <location>
        <begin position="605"/>
        <end position="620"/>
    </location>
</feature>
<feature type="compositionally biased region" description="Low complexity" evidence="1">
    <location>
        <begin position="643"/>
        <end position="655"/>
    </location>
</feature>
<feature type="compositionally biased region" description="Low complexity" evidence="1">
    <location>
        <begin position="706"/>
        <end position="716"/>
    </location>
</feature>
<feature type="compositionally biased region" description="Acidic residues" evidence="1">
    <location>
        <begin position="717"/>
        <end position="731"/>
    </location>
</feature>
<feature type="compositionally biased region" description="Low complexity" evidence="1">
    <location>
        <begin position="1203"/>
        <end position="1212"/>
    </location>
</feature>
<gene>
    <name evidence="6" type="primary">atos</name>
    <name evidence="6" type="synonym">mda</name>
    <name evidence="6" type="ORF">CG9005</name>
</gene>
<keyword id="KW-0539">Nucleus</keyword>
<keyword id="KW-1185">Reference proteome</keyword>
<comment type="function">
    <text evidence="2">Transcription regulator that synchronizes transcriptional and translational programs to promote macrophage invasion of tissues. Required in macrophages for their early invasion into the extended germband. Induces transcriptional expression of metabolic enzymes as well as of the translational regulator pths/DDX47. With pths/DDX47, adjusts transcription and translation of a subset of OXPHOS genes to increase mitochondrial bioenergetics and allow macrophage tissue invasion.</text>
</comment>
<comment type="subcellular location">
    <subcellularLocation>
        <location evidence="2">Nucleus</location>
    </subcellularLocation>
</comment>
<comment type="tissue specificity">
    <text evidence="2">Expressed in macrophages.</text>
</comment>
<comment type="developmental stage">
    <text evidence="2">Maternally deposited and expressed in the mesoderm, including the region in which macrophages are specified during stage 4-6. Further up-regulated in macrophages starting phase 7 while its expression decreases in the remaining mesoderm. Remains expressed during stage 9-12 in macrophages.</text>
</comment>
<comment type="domain">
    <text evidence="3">The protein contains 2 transactivation domains (TAD). Each of these domains may be required for transcriptional activation of a subset of target genes.</text>
</comment>
<comment type="similarity">
    <text evidence="3">Belongs to the ATOS family.</text>
</comment>
<proteinExistence type="evidence at transcript level"/>
<evidence type="ECO:0000256" key="1">
    <source>
        <dbReference type="SAM" id="MobiDB-lite"/>
    </source>
</evidence>
<evidence type="ECO:0000269" key="2">
    <source>
    </source>
</evidence>
<evidence type="ECO:0000305" key="3"/>
<evidence type="ECO:0000312" key="4">
    <source>
        <dbReference type="EMBL" id="AAM11024.1"/>
    </source>
</evidence>
<evidence type="ECO:0000312" key="5">
    <source>
        <dbReference type="EMBL" id="ADM47837.1"/>
    </source>
</evidence>
<evidence type="ECO:0000312" key="6">
    <source>
        <dbReference type="FlyBase" id="FBgn0033638"/>
    </source>
</evidence>
<evidence type="ECO:0000312" key="7">
    <source>
        <dbReference type="Proteomes" id="UP000000803"/>
    </source>
</evidence>
<name>ATOS_DROME</name>
<organism evidence="7">
    <name type="scientific">Drosophila melanogaster</name>
    <name type="common">Fruit fly</name>
    <dbReference type="NCBI Taxonomy" id="7227"/>
    <lineage>
        <taxon>Eukaryota</taxon>
        <taxon>Metazoa</taxon>
        <taxon>Ecdysozoa</taxon>
        <taxon>Arthropoda</taxon>
        <taxon>Hexapoda</taxon>
        <taxon>Insecta</taxon>
        <taxon>Pterygota</taxon>
        <taxon>Neoptera</taxon>
        <taxon>Endopterygota</taxon>
        <taxon>Diptera</taxon>
        <taxon>Brachycera</taxon>
        <taxon>Muscomorpha</taxon>
        <taxon>Ephydroidea</taxon>
        <taxon>Drosophilidae</taxon>
        <taxon>Drosophila</taxon>
        <taxon>Sophophora</taxon>
    </lineage>
</organism>
<reference evidence="7" key="1">
    <citation type="journal article" date="2000" name="Science">
        <title>The genome sequence of Drosophila melanogaster.</title>
        <authorList>
            <person name="Adams M.D."/>
            <person name="Celniker S.E."/>
            <person name="Holt R.A."/>
            <person name="Evans C.A."/>
            <person name="Gocayne J.D."/>
            <person name="Amanatides P.G."/>
            <person name="Scherer S.E."/>
            <person name="Li P.W."/>
            <person name="Hoskins R.A."/>
            <person name="Galle R.F."/>
            <person name="George R.A."/>
            <person name="Lewis S.E."/>
            <person name="Richards S."/>
            <person name="Ashburner M."/>
            <person name="Henderson S.N."/>
            <person name="Sutton G.G."/>
            <person name="Wortman J.R."/>
            <person name="Yandell M.D."/>
            <person name="Zhang Q."/>
            <person name="Chen L.X."/>
            <person name="Brandon R.C."/>
            <person name="Rogers Y.-H.C."/>
            <person name="Blazej R.G."/>
            <person name="Champe M."/>
            <person name="Pfeiffer B.D."/>
            <person name="Wan K.H."/>
            <person name="Doyle C."/>
            <person name="Baxter E.G."/>
            <person name="Helt G."/>
            <person name="Nelson C.R."/>
            <person name="Miklos G.L.G."/>
            <person name="Abril J.F."/>
            <person name="Agbayani A."/>
            <person name="An H.-J."/>
            <person name="Andrews-Pfannkoch C."/>
            <person name="Baldwin D."/>
            <person name="Ballew R.M."/>
            <person name="Basu A."/>
            <person name="Baxendale J."/>
            <person name="Bayraktaroglu L."/>
            <person name="Beasley E.M."/>
            <person name="Beeson K.Y."/>
            <person name="Benos P.V."/>
            <person name="Berman B.P."/>
            <person name="Bhandari D."/>
            <person name="Bolshakov S."/>
            <person name="Borkova D."/>
            <person name="Botchan M.R."/>
            <person name="Bouck J."/>
            <person name="Brokstein P."/>
            <person name="Brottier P."/>
            <person name="Burtis K.C."/>
            <person name="Busam D.A."/>
            <person name="Butler H."/>
            <person name="Cadieu E."/>
            <person name="Center A."/>
            <person name="Chandra I."/>
            <person name="Cherry J.M."/>
            <person name="Cawley S."/>
            <person name="Dahlke C."/>
            <person name="Davenport L.B."/>
            <person name="Davies P."/>
            <person name="de Pablos B."/>
            <person name="Delcher A."/>
            <person name="Deng Z."/>
            <person name="Mays A.D."/>
            <person name="Dew I."/>
            <person name="Dietz S.M."/>
            <person name="Dodson K."/>
            <person name="Doup L.E."/>
            <person name="Downes M."/>
            <person name="Dugan-Rocha S."/>
            <person name="Dunkov B.C."/>
            <person name="Dunn P."/>
            <person name="Durbin K.J."/>
            <person name="Evangelista C.C."/>
            <person name="Ferraz C."/>
            <person name="Ferriera S."/>
            <person name="Fleischmann W."/>
            <person name="Fosler C."/>
            <person name="Gabrielian A.E."/>
            <person name="Garg N.S."/>
            <person name="Gelbart W.M."/>
            <person name="Glasser K."/>
            <person name="Glodek A."/>
            <person name="Gong F."/>
            <person name="Gorrell J.H."/>
            <person name="Gu Z."/>
            <person name="Guan P."/>
            <person name="Harris M."/>
            <person name="Harris N.L."/>
            <person name="Harvey D.A."/>
            <person name="Heiman T.J."/>
            <person name="Hernandez J.R."/>
            <person name="Houck J."/>
            <person name="Hostin D."/>
            <person name="Houston K.A."/>
            <person name="Howland T.J."/>
            <person name="Wei M.-H."/>
            <person name="Ibegwam C."/>
            <person name="Jalali M."/>
            <person name="Kalush F."/>
            <person name="Karpen G.H."/>
            <person name="Ke Z."/>
            <person name="Kennison J.A."/>
            <person name="Ketchum K.A."/>
            <person name="Kimmel B.E."/>
            <person name="Kodira C.D."/>
            <person name="Kraft C.L."/>
            <person name="Kravitz S."/>
            <person name="Kulp D."/>
            <person name="Lai Z."/>
            <person name="Lasko P."/>
            <person name="Lei Y."/>
            <person name="Levitsky A.A."/>
            <person name="Li J.H."/>
            <person name="Li Z."/>
            <person name="Liang Y."/>
            <person name="Lin X."/>
            <person name="Liu X."/>
            <person name="Mattei B."/>
            <person name="McIntosh T.C."/>
            <person name="McLeod M.P."/>
            <person name="McPherson D."/>
            <person name="Merkulov G."/>
            <person name="Milshina N.V."/>
            <person name="Mobarry C."/>
            <person name="Morris J."/>
            <person name="Moshrefi A."/>
            <person name="Mount S.M."/>
            <person name="Moy M."/>
            <person name="Murphy B."/>
            <person name="Murphy L."/>
            <person name="Muzny D.M."/>
            <person name="Nelson D.L."/>
            <person name="Nelson D.R."/>
            <person name="Nelson K.A."/>
            <person name="Nixon K."/>
            <person name="Nusskern D.R."/>
            <person name="Pacleb J.M."/>
            <person name="Palazzolo M."/>
            <person name="Pittman G.S."/>
            <person name="Pan S."/>
            <person name="Pollard J."/>
            <person name="Puri V."/>
            <person name="Reese M.G."/>
            <person name="Reinert K."/>
            <person name="Remington K."/>
            <person name="Saunders R.D.C."/>
            <person name="Scheeler F."/>
            <person name="Shen H."/>
            <person name="Shue B.C."/>
            <person name="Siden-Kiamos I."/>
            <person name="Simpson M."/>
            <person name="Skupski M.P."/>
            <person name="Smith T.J."/>
            <person name="Spier E."/>
            <person name="Spradling A.C."/>
            <person name="Stapleton M."/>
            <person name="Strong R."/>
            <person name="Sun E."/>
            <person name="Svirskas R."/>
            <person name="Tector C."/>
            <person name="Turner R."/>
            <person name="Venter E."/>
            <person name="Wang A.H."/>
            <person name="Wang X."/>
            <person name="Wang Z.-Y."/>
            <person name="Wassarman D.A."/>
            <person name="Weinstock G.M."/>
            <person name="Weissenbach J."/>
            <person name="Williams S.M."/>
            <person name="Woodage T."/>
            <person name="Worley K.C."/>
            <person name="Wu D."/>
            <person name="Yang S."/>
            <person name="Yao Q.A."/>
            <person name="Ye J."/>
            <person name="Yeh R.-F."/>
            <person name="Zaveri J.S."/>
            <person name="Zhan M."/>
            <person name="Zhang G."/>
            <person name="Zhao Q."/>
            <person name="Zheng L."/>
            <person name="Zheng X.H."/>
            <person name="Zhong F.N."/>
            <person name="Zhong W."/>
            <person name="Zhou X."/>
            <person name="Zhu S.C."/>
            <person name="Zhu X."/>
            <person name="Smith H.O."/>
            <person name="Gibbs R.A."/>
            <person name="Myers E.W."/>
            <person name="Rubin G.M."/>
            <person name="Venter J.C."/>
        </authorList>
    </citation>
    <scope>NUCLEOTIDE SEQUENCE [LARGE SCALE GENOMIC DNA]</scope>
    <source>
        <strain>Berkeley</strain>
    </source>
</reference>
<reference evidence="7" key="2">
    <citation type="journal article" date="2002" name="Genome Biol.">
        <title>Annotation of the Drosophila melanogaster euchromatic genome: a systematic review.</title>
        <authorList>
            <person name="Misra S."/>
            <person name="Crosby M.A."/>
            <person name="Mungall C.J."/>
            <person name="Matthews B.B."/>
            <person name="Campbell K.S."/>
            <person name="Hradecky P."/>
            <person name="Huang Y."/>
            <person name="Kaminker J.S."/>
            <person name="Millburn G.H."/>
            <person name="Prochnik S.E."/>
            <person name="Smith C.D."/>
            <person name="Tupy J.L."/>
            <person name="Whitfield E.J."/>
            <person name="Bayraktaroglu L."/>
            <person name="Berman B.P."/>
            <person name="Bettencourt B.R."/>
            <person name="Celniker S.E."/>
            <person name="de Grey A.D.N.J."/>
            <person name="Drysdale R.A."/>
            <person name="Harris N.L."/>
            <person name="Richter J."/>
            <person name="Russo S."/>
            <person name="Schroeder A.J."/>
            <person name="Shu S.Q."/>
            <person name="Stapleton M."/>
            <person name="Yamada C."/>
            <person name="Ashburner M."/>
            <person name="Gelbart W.M."/>
            <person name="Rubin G.M."/>
            <person name="Lewis S.E."/>
        </authorList>
    </citation>
    <scope>GENOME REANNOTATION</scope>
    <source>
        <strain>Berkeley</strain>
    </source>
</reference>
<reference evidence="4" key="3">
    <citation type="submission" date="2002-04" db="EMBL/GenBank/DDBJ databases">
        <authorList>
            <person name="Stapleton M."/>
            <person name="Brokstein P."/>
            <person name="Hong L."/>
            <person name="Agbayani A."/>
            <person name="Carlson J."/>
            <person name="Champe M."/>
            <person name="Chavez C."/>
            <person name="Dorsett V."/>
            <person name="Dresnek D."/>
            <person name="Farfan D."/>
            <person name="Frise E."/>
            <person name="George R."/>
            <person name="Gonzalez M."/>
            <person name="Guarin H."/>
            <person name="Kronmiller B."/>
            <person name="Li P."/>
            <person name="Liao G."/>
            <person name="Miranda A."/>
            <person name="Mungall C.J."/>
            <person name="Nunoo J."/>
            <person name="Pacleb J."/>
            <person name="Paragas V."/>
            <person name="Park S."/>
            <person name="Patel S."/>
            <person name="Phouanenavong S."/>
            <person name="Wan K."/>
            <person name="Yu C."/>
            <person name="Lewis S.E."/>
            <person name="Rubin G.M."/>
            <person name="Celniker S."/>
        </authorList>
    </citation>
    <scope>NUCLEOTIDE SEQUENCE [MRNA]</scope>
    <source>
        <strain evidence="4">Berkeley</strain>
    </source>
</reference>
<reference evidence="5" key="4">
    <citation type="submission" date="2010-08" db="EMBL/GenBank/DDBJ databases">
        <authorList>
            <person name="Carlson J."/>
            <person name="Booth B."/>
            <person name="Frise E."/>
            <person name="Park S."/>
            <person name="Wan K."/>
            <person name="Yu C."/>
            <person name="Celniker S."/>
        </authorList>
    </citation>
    <scope>NUCLEOTIDE SEQUENCE [MRNA]</scope>
    <source>
        <strain evidence="5">Berkeley</strain>
    </source>
</reference>
<reference key="5">
    <citation type="journal article" date="2022" name="EMBO J.">
        <title>Macrophage mitochondrial bioenergetics and tissue invasion are boosted by an Atossa-Porthos axis in Drosophila.</title>
        <authorList>
            <person name="Emtenani S."/>
            <person name="Martin E.T."/>
            <person name="Gyoergy A."/>
            <person name="Bicher J."/>
            <person name="Genger J.W."/>
            <person name="Koecher T."/>
            <person name="Akhmanova M."/>
            <person name="Guarda M."/>
            <person name="Roblek M."/>
            <person name="Bergthaler A."/>
            <person name="Hurd T.R."/>
            <person name="Rangan P."/>
            <person name="Siekhaus D.E."/>
        </authorList>
    </citation>
    <scope>FUNCTION</scope>
    <scope>DOMAIN</scope>
    <scope>SUBCELLULAR LOCATION</scope>
    <scope>DEVELOPMENTAL STAGE</scope>
    <scope>TISSUE SPECIFICITY</scope>
</reference>
<accession>Q7JXG9</accession>
<dbReference type="EMBL" id="AE013599">
    <property type="protein sequence ID" value="AAF58636.1"/>
    <property type="molecule type" value="Genomic_DNA"/>
</dbReference>
<dbReference type="EMBL" id="AE013599">
    <property type="protein sequence ID" value="ACZ94393.1"/>
    <property type="molecule type" value="Genomic_DNA"/>
</dbReference>
<dbReference type="EMBL" id="AE013599">
    <property type="protein sequence ID" value="AFH08021.1"/>
    <property type="molecule type" value="Genomic_DNA"/>
</dbReference>
<dbReference type="EMBL" id="AY094671">
    <property type="protein sequence ID" value="AAM11024.1"/>
    <property type="molecule type" value="mRNA"/>
</dbReference>
<dbReference type="EMBL" id="BT125638">
    <property type="protein sequence ID" value="ADM47837.1"/>
    <property type="molecule type" value="mRNA"/>
</dbReference>
<dbReference type="RefSeq" id="NP_001163118.1">
    <property type="nucleotide sequence ID" value="NM_001169647.3"/>
</dbReference>
<dbReference type="RefSeq" id="NP_001246267.1">
    <property type="nucleotide sequence ID" value="NM_001259338.3"/>
</dbReference>
<dbReference type="RefSeq" id="NP_610688.1">
    <property type="nucleotide sequence ID" value="NM_136844.4"/>
</dbReference>
<dbReference type="FunCoup" id="Q7JXG9">
    <property type="interactions" value="460"/>
</dbReference>
<dbReference type="STRING" id="7227.FBpp0290167"/>
<dbReference type="PaxDb" id="7227-FBpp0297171"/>
<dbReference type="DNASU" id="36243"/>
<dbReference type="EnsemblMetazoa" id="FBtr0088089">
    <property type="protein sequence ID" value="FBpp0087191"/>
    <property type="gene ID" value="FBgn0033638"/>
</dbReference>
<dbReference type="EnsemblMetazoa" id="FBtr0300945">
    <property type="protein sequence ID" value="FBpp0290167"/>
    <property type="gene ID" value="FBgn0033638"/>
</dbReference>
<dbReference type="EnsemblMetazoa" id="FBtr0306029">
    <property type="protein sequence ID" value="FBpp0297171"/>
    <property type="gene ID" value="FBgn0033638"/>
</dbReference>
<dbReference type="EnsemblMetazoa" id="FBtr0479845">
    <property type="protein sequence ID" value="FBpp0428181"/>
    <property type="gene ID" value="FBgn0033638"/>
</dbReference>
<dbReference type="GeneID" id="36243"/>
<dbReference type="KEGG" id="dme:Dmel_CG9005"/>
<dbReference type="UCSC" id="CG9005-RA">
    <property type="organism name" value="d. melanogaster"/>
</dbReference>
<dbReference type="AGR" id="FB:FBgn0033638"/>
<dbReference type="CTD" id="36243"/>
<dbReference type="FlyBase" id="FBgn0033638">
    <property type="gene designation" value="atos"/>
</dbReference>
<dbReference type="VEuPathDB" id="VectorBase:FBgn0033638"/>
<dbReference type="eggNOG" id="KOG2306">
    <property type="taxonomic scope" value="Eukaryota"/>
</dbReference>
<dbReference type="HOGENOM" id="CLU_264863_0_0_1"/>
<dbReference type="OMA" id="KQAAFYK"/>
<dbReference type="OrthoDB" id="8625101at2759"/>
<dbReference type="BioGRID-ORCS" id="36243">
    <property type="hits" value="0 hits in 3 CRISPR screens"/>
</dbReference>
<dbReference type="GenomeRNAi" id="36243"/>
<dbReference type="PRO" id="PR:Q7JXG9"/>
<dbReference type="Proteomes" id="UP000000803">
    <property type="component" value="Chromosome 2R"/>
</dbReference>
<dbReference type="Bgee" id="FBgn0033638">
    <property type="expression patterns" value="Expressed in adult oenocyte (Drosophila) in body wall and 296 other cell types or tissues"/>
</dbReference>
<dbReference type="ExpressionAtlas" id="Q7JXG9">
    <property type="expression patterns" value="baseline and differential"/>
</dbReference>
<dbReference type="GO" id="GO:0005634">
    <property type="term" value="C:nucleus"/>
    <property type="evidence" value="ECO:0007669"/>
    <property type="project" value="UniProtKB-SubCell"/>
</dbReference>
<dbReference type="InterPro" id="IPR033473">
    <property type="entry name" value="Atos-like_C"/>
</dbReference>
<dbReference type="InterPro" id="IPR025261">
    <property type="entry name" value="Atos-like_cons_dom"/>
</dbReference>
<dbReference type="InterPro" id="IPR051506">
    <property type="entry name" value="ATOS_Transcription_Regulators"/>
</dbReference>
<dbReference type="PANTHER" id="PTHR13199">
    <property type="entry name" value="GH03947P"/>
    <property type="match status" value="1"/>
</dbReference>
<dbReference type="PANTHER" id="PTHR13199:SF11">
    <property type="entry name" value="PROTEIN ATOSSA"/>
    <property type="match status" value="1"/>
</dbReference>
<dbReference type="Pfam" id="PF13889">
    <property type="entry name" value="Chromosome_seg"/>
    <property type="match status" value="1"/>
</dbReference>
<dbReference type="Pfam" id="PF13915">
    <property type="entry name" value="DUF4210"/>
    <property type="match status" value="1"/>
</dbReference>
<dbReference type="SMART" id="SM01177">
    <property type="entry name" value="DUF4210"/>
    <property type="match status" value="1"/>
</dbReference>
<protein>
    <recommendedName>
        <fullName evidence="3">Protein Atossa</fullName>
    </recommendedName>
</protein>